<proteinExistence type="evidence at protein level"/>
<sequence>MKHNTLRAVFQFSFFIGICTFIMIAGYSYQINYNQRMGIFYGGNITFKKVPKVVIYTATPFFDVPIENSILRDCSEKIKNSCTVTSNNKTFPIADAIVFHSRDINETKLSFFNKNRRYDIPYIMMAMENPFFAGLTVYHNFFNWTMTYRTDSDIFHPYGAFVKSYVPAEVNYSEIWNSKTKETLWMVSNGNAQNKRKELVEKLIKKGMSIDLYGQLYKKEPAECPRRRGPPGCDVKFHSPYKFAIAFENSNCKDYVTEKFWKKAGIYKTVPIVMSRKIYRDLGIPDSMYIAVDDYPNLEEFVHHIQNVTSNEEEYMKYHKWRKQFKIVDTNEGNIGFCQLCQKLAGYKRKLVPHKVYENLNSWHSTSTCDNSFATRFL</sequence>
<accession>G5EE06</accession>
<protein>
    <recommendedName>
        <fullName evidence="5">Alpha-(1,3)-fucosyltransferase fut-5</fullName>
        <ecNumber evidence="4">2.4.1.65</ecNumber>
    </recommendedName>
    <alternativeName>
        <fullName evidence="6">Fucosyltransferase fut-5</fullName>
    </alternativeName>
</protein>
<evidence type="ECO:0000255" key="1"/>
<evidence type="ECO:0000255" key="2">
    <source>
        <dbReference type="PROSITE-ProRule" id="PRU00498"/>
    </source>
</evidence>
<evidence type="ECO:0000255" key="3">
    <source>
        <dbReference type="RuleBase" id="RU003832"/>
    </source>
</evidence>
<evidence type="ECO:0000269" key="4">
    <source>
    </source>
</evidence>
<evidence type="ECO:0000303" key="5">
    <source>
    </source>
</evidence>
<evidence type="ECO:0000305" key="6"/>
<evidence type="ECO:0000305" key="7">
    <source>
    </source>
</evidence>
<evidence type="ECO:0000312" key="8">
    <source>
        <dbReference type="EMBL" id="CAG32979.1"/>
    </source>
</evidence>
<evidence type="ECO:0000312" key="9">
    <source>
        <dbReference type="Proteomes" id="UP000001940"/>
    </source>
</evidence>
<evidence type="ECO:0000312" key="10">
    <source>
        <dbReference type="WormBase" id="T05A7.10"/>
    </source>
</evidence>
<organism evidence="8">
    <name type="scientific">Caenorhabditis elegans</name>
    <dbReference type="NCBI Taxonomy" id="6239"/>
    <lineage>
        <taxon>Eukaryota</taxon>
        <taxon>Metazoa</taxon>
        <taxon>Ecdysozoa</taxon>
        <taxon>Nematoda</taxon>
        <taxon>Chromadorea</taxon>
        <taxon>Rhabditida</taxon>
        <taxon>Rhabditina</taxon>
        <taxon>Rhabditomorpha</taxon>
        <taxon>Rhabditoidea</taxon>
        <taxon>Rhabditidae</taxon>
        <taxon>Peloderinae</taxon>
        <taxon>Caenorhabditis</taxon>
    </lineage>
</organism>
<name>FUTD_CAEEL</name>
<feature type="chain" id="PRO_0000438294" description="Alpha-(1,3)-fucosyltransferase fut-5">
    <location>
        <begin position="1"/>
        <end position="378"/>
    </location>
</feature>
<feature type="topological domain" description="Cytoplasmic" evidence="6">
    <location>
        <begin position="1"/>
        <end position="7"/>
    </location>
</feature>
<feature type="transmembrane region" description="Helical; Signal-anchor for type II membrane protein" evidence="1">
    <location>
        <begin position="8"/>
        <end position="28"/>
    </location>
</feature>
<feature type="topological domain" description="Lumenal" evidence="6">
    <location>
        <begin position="29"/>
        <end position="378"/>
    </location>
</feature>
<feature type="glycosylation site" description="N-linked (GlcNAc...) asparagine" evidence="2">
    <location>
        <position position="44"/>
    </location>
</feature>
<feature type="glycosylation site" description="N-linked (GlcNAc...) asparagine" evidence="2">
    <location>
        <position position="88"/>
    </location>
</feature>
<feature type="glycosylation site" description="N-linked (GlcNAc...) asparagine" evidence="2">
    <location>
        <position position="105"/>
    </location>
</feature>
<feature type="glycosylation site" description="N-linked (GlcNAc...) asparagine" evidence="2">
    <location>
        <position position="143"/>
    </location>
</feature>
<feature type="glycosylation site" description="N-linked (GlcNAc...) asparagine" evidence="2">
    <location>
        <position position="171"/>
    </location>
</feature>
<feature type="glycosylation site" description="N-linked (GlcNAc...) asparagine" evidence="2">
    <location>
        <position position="307"/>
    </location>
</feature>
<dbReference type="EC" id="2.4.1.65" evidence="4"/>
<dbReference type="EMBL" id="AJ745073">
    <property type="protein sequence ID" value="CAG32979.1"/>
    <property type="molecule type" value="mRNA"/>
</dbReference>
<dbReference type="EMBL" id="BX284602">
    <property type="protein sequence ID" value="CCD69228.1"/>
    <property type="molecule type" value="Genomic_DNA"/>
</dbReference>
<dbReference type="RefSeq" id="NP_001022310.1">
    <property type="nucleotide sequence ID" value="NM_001027139.2"/>
</dbReference>
<dbReference type="SMR" id="G5EE06"/>
<dbReference type="FunCoup" id="G5EE06">
    <property type="interactions" value="190"/>
</dbReference>
<dbReference type="STRING" id="6239.T05A7.10.1"/>
<dbReference type="CAZy" id="GT10">
    <property type="family name" value="Glycosyltransferase Family 10"/>
</dbReference>
<dbReference type="GlyCosmos" id="G5EE06">
    <property type="glycosylation" value="6 sites, No reported glycans"/>
</dbReference>
<dbReference type="PaxDb" id="6239-T05A7.10"/>
<dbReference type="EnsemblMetazoa" id="T05A7.10.1">
    <property type="protein sequence ID" value="T05A7.10.1"/>
    <property type="gene ID" value="WBGene00043986"/>
</dbReference>
<dbReference type="GeneID" id="3565968"/>
<dbReference type="KEGG" id="cel:CELE_T05A7.10"/>
<dbReference type="AGR" id="WB:WBGene00043986"/>
<dbReference type="CTD" id="3565968"/>
<dbReference type="WormBase" id="T05A7.10">
    <property type="protein sequence ID" value="CE37986"/>
    <property type="gene ID" value="WBGene00043986"/>
    <property type="gene designation" value="fut-5"/>
</dbReference>
<dbReference type="eggNOG" id="KOG2619">
    <property type="taxonomic scope" value="Eukaryota"/>
</dbReference>
<dbReference type="GeneTree" id="ENSGT00970000196480"/>
<dbReference type="HOGENOM" id="CLU_032075_3_0_1"/>
<dbReference type="InParanoid" id="G5EE06"/>
<dbReference type="OMA" id="CKACRIL"/>
<dbReference type="OrthoDB" id="5912041at2759"/>
<dbReference type="PhylomeDB" id="G5EE06"/>
<dbReference type="UniPathway" id="UPA00378"/>
<dbReference type="PRO" id="PR:G5EE06"/>
<dbReference type="Proteomes" id="UP000001940">
    <property type="component" value="Chromosome II"/>
</dbReference>
<dbReference type="Bgee" id="WBGene00043986">
    <property type="expression patterns" value="Expressed in adult organism and 1 other cell type or tissue"/>
</dbReference>
<dbReference type="GO" id="GO:0032580">
    <property type="term" value="C:Golgi cisterna membrane"/>
    <property type="evidence" value="ECO:0007669"/>
    <property type="project" value="UniProtKB-SubCell"/>
</dbReference>
<dbReference type="GO" id="GO:0017060">
    <property type="term" value="F:3-galactosyl-N-acetylglucosaminide 4-alpha-L-fucosyltransferase activity"/>
    <property type="evidence" value="ECO:0000315"/>
    <property type="project" value="UniProtKB"/>
</dbReference>
<dbReference type="GO" id="GO:0046872">
    <property type="term" value="F:metal ion binding"/>
    <property type="evidence" value="ECO:0007669"/>
    <property type="project" value="UniProtKB-KW"/>
</dbReference>
<dbReference type="GO" id="GO:0036065">
    <property type="term" value="P:fucosylation"/>
    <property type="evidence" value="ECO:0000315"/>
    <property type="project" value="UniProtKB"/>
</dbReference>
<dbReference type="GO" id="GO:0006486">
    <property type="term" value="P:protein glycosylation"/>
    <property type="evidence" value="ECO:0007669"/>
    <property type="project" value="UniProtKB-UniPathway"/>
</dbReference>
<dbReference type="FunFam" id="3.40.50.11660:FF:000002">
    <property type="entry name" value="Alpha-(1,3)-fucosyltransferase"/>
    <property type="match status" value="1"/>
</dbReference>
<dbReference type="Gene3D" id="3.40.50.11660">
    <property type="entry name" value="Glycosyl transferase family 10, C-terminal domain"/>
    <property type="match status" value="1"/>
</dbReference>
<dbReference type="InterPro" id="IPR055270">
    <property type="entry name" value="Glyco_tran_10_C"/>
</dbReference>
<dbReference type="InterPro" id="IPR031481">
    <property type="entry name" value="Glyco_tran_10_N"/>
</dbReference>
<dbReference type="InterPro" id="IPR001503">
    <property type="entry name" value="Glyco_trans_10"/>
</dbReference>
<dbReference type="InterPro" id="IPR038577">
    <property type="entry name" value="GT10-like_C_sf"/>
</dbReference>
<dbReference type="PANTHER" id="PTHR48438">
    <property type="entry name" value="ALPHA-(1,3)-FUCOSYLTRANSFERASE C-RELATED"/>
    <property type="match status" value="1"/>
</dbReference>
<dbReference type="PANTHER" id="PTHR48438:SF1">
    <property type="entry name" value="ALPHA-(1,3)-FUCOSYLTRANSFERASE C-RELATED"/>
    <property type="match status" value="1"/>
</dbReference>
<dbReference type="Pfam" id="PF17039">
    <property type="entry name" value="Glyco_tran_10_N"/>
    <property type="match status" value="1"/>
</dbReference>
<dbReference type="Pfam" id="PF00852">
    <property type="entry name" value="Glyco_transf_10"/>
    <property type="match status" value="1"/>
</dbReference>
<dbReference type="SUPFAM" id="SSF53756">
    <property type="entry name" value="UDP-Glycosyltransferase/glycogen phosphorylase"/>
    <property type="match status" value="1"/>
</dbReference>
<gene>
    <name evidence="10" type="primary">fut-5</name>
    <name evidence="5" type="synonym">CEFT-2</name>
    <name evidence="10" type="ORF">T05A7.10</name>
</gene>
<comment type="function">
    <text evidence="4">Catalyzes the addition of fucose in alpha 1-3 linkage to GalNAc-beta-1-&gt;4-GlcNAc-beta-1-&gt;3-Gal-beta-1-&gt;4-Glc (LDNT)acceptor. Unlike fut-1, does not add fucose to Man-alpha-1-&gt;3-(Man-alpha-1-&gt;6)-Man-beta-1-&gt;4-GlcNAc-beta-1-&gt;4-GlcNAc-beta-1-Asn (M3), Man-alpha-1-&gt;3-(Man-alpha-1-&gt;6)-Man-beta-1-&gt;4-GlcNAc-beta-1-&gt;4-(Fuc-alpha-1-&gt;6)-GlcNAc-beta-1-Asn (M3F6) or GlcNAc-beta-1-&gt;2-Man-alpha-1-&gt;3-(GlcNAc-beta-1-&gt;2-Man-alpha-1-&gt;6)-Man-beta-1-4-GlcNAc-beta-1-&gt;4-(Fuc-alpha-1-&gt;6)-GlcNAc-beta-1-Asn (GnM3F6) acceptors.</text>
</comment>
<comment type="catalytic activity">
    <reaction evidence="4">
        <text>a beta-D-galactosyl-(1-&gt;3)-N-acetyl-beta-D-glucosaminyl derivative + GDP-beta-L-fucose = a beta-D-galactosyl-(1-&gt;3)-[alpha-L-fucosyl-(1-&gt;4)]-N-acetyl-beta-D-glucosaminyl derivative + GDP + H(+)</text>
        <dbReference type="Rhea" id="RHEA:23628"/>
        <dbReference type="ChEBI" id="CHEBI:15378"/>
        <dbReference type="ChEBI" id="CHEBI:57273"/>
        <dbReference type="ChEBI" id="CHEBI:58189"/>
        <dbReference type="ChEBI" id="CHEBI:133506"/>
        <dbReference type="ChEBI" id="CHEBI:140304"/>
        <dbReference type="EC" id="2.4.1.65"/>
    </reaction>
</comment>
<comment type="cofactor">
    <cofactor evidence="4">
        <name>Ca(2+)</name>
        <dbReference type="ChEBI" id="CHEBI:29108"/>
    </cofactor>
</comment>
<comment type="activity regulation">
    <text evidence="4">Inhibited by Cu(2+) and Ni(2+), and to a lesser extent by EDTA, Mn(2+) and Mg(2+).</text>
</comment>
<comment type="biophysicochemical properties">
    <temperatureDependence>
        <text evidence="4">Optimum temperature is 23 degrees Celsius. Vey low activity at 37 degrees Celsius.</text>
    </temperatureDependence>
</comment>
<comment type="pathway">
    <text evidence="7">Protein modification; protein glycosylation.</text>
</comment>
<comment type="subcellular location">
    <subcellularLocation>
        <location evidence="3">Golgi apparatus</location>
        <location evidence="3">Golgi stack membrane</location>
        <topology evidence="3">Single-pass type II membrane protein</topology>
    </subcellularLocation>
</comment>
<comment type="developmental stage">
    <text evidence="4">Expressed in larvae and adult.</text>
</comment>
<comment type="PTM">
    <text evidence="4">N-glycosylated.</text>
</comment>
<comment type="similarity">
    <text evidence="3">Belongs to the glycosyltransferase 10 family.</text>
</comment>
<keyword id="KW-0106">Calcium</keyword>
<keyword id="KW-0325">Glycoprotein</keyword>
<keyword id="KW-0328">Glycosyltransferase</keyword>
<keyword id="KW-0333">Golgi apparatus</keyword>
<keyword id="KW-0472">Membrane</keyword>
<keyword id="KW-0479">Metal-binding</keyword>
<keyword id="KW-1185">Reference proteome</keyword>
<keyword id="KW-0735">Signal-anchor</keyword>
<keyword id="KW-0808">Transferase</keyword>
<keyword id="KW-0812">Transmembrane</keyword>
<keyword id="KW-1133">Transmembrane helix</keyword>
<reference evidence="8" key="1">
    <citation type="journal article" date="2004" name="J. Biol. Chem.">
        <title>Molecular basis of anti-horseradish peroxidase staining in Caenorhabditis elegans.</title>
        <authorList>
            <person name="Paschinger K."/>
            <person name="Rendic D."/>
            <person name="Lochnit G."/>
            <person name="Jantsch V."/>
            <person name="Wilson I.B.H."/>
        </authorList>
    </citation>
    <scope>NUCLEOTIDE SEQUENCE [MRNA]</scope>
</reference>
<reference evidence="9" key="2">
    <citation type="journal article" date="1998" name="Science">
        <title>Genome sequence of the nematode C. elegans: a platform for investigating biology.</title>
        <authorList>
            <consortium name="The C. elegans sequencing consortium"/>
        </authorList>
    </citation>
    <scope>NUCLEOTIDE SEQUENCE [LARGE SCALE GENOMIC DNA]</scope>
    <source>
        <strain evidence="9">Bristol N2</strain>
    </source>
</reference>
<reference evidence="6" key="3">
    <citation type="journal article" date="2007" name="Glycobiology">
        <title>Molecular cloning and characterization of the Caenorhabditis elegans alpha1,3-fucosyltransferase family.</title>
        <authorList>
            <person name="Nguyen K."/>
            <person name="van Die I."/>
            <person name="Grundahl K.M."/>
            <person name="Kawar Z.S."/>
            <person name="Cummings R.D."/>
        </authorList>
    </citation>
    <scope>FUNCTION</scope>
    <scope>CATALYTIC ACTIVITY</scope>
    <scope>COFACTOR</scope>
    <scope>ACTIVITY REGULATION</scope>
    <scope>BIOPHYSICOCHEMICAL PROPERTIES</scope>
    <scope>DEVELOPMENTAL STAGE</scope>
    <scope>GLYCOSYLATION</scope>
</reference>